<organism>
    <name type="scientific">Mycolicibacterium paratuberculosis (strain ATCC BAA-968 / K-10)</name>
    <name type="common">Mycobacterium paratuberculosis</name>
    <dbReference type="NCBI Taxonomy" id="262316"/>
    <lineage>
        <taxon>Bacteria</taxon>
        <taxon>Bacillati</taxon>
        <taxon>Actinomycetota</taxon>
        <taxon>Actinomycetes</taxon>
        <taxon>Mycobacteriales</taxon>
        <taxon>Mycobacteriaceae</taxon>
        <taxon>Mycobacterium</taxon>
        <taxon>Mycobacterium avium complex (MAC)</taxon>
    </lineage>
</organism>
<evidence type="ECO:0000255" key="1">
    <source>
        <dbReference type="HAMAP-Rule" id="MF_00251"/>
    </source>
</evidence>
<evidence type="ECO:0000305" key="2"/>
<feature type="chain" id="PRO_0000126217" description="Large ribosomal subunit protein bL36">
    <location>
        <begin position="1"/>
        <end position="37"/>
    </location>
</feature>
<dbReference type="EMBL" id="AE016958">
    <property type="protein sequence ID" value="AAS06779.1"/>
    <property type="molecule type" value="Genomic_DNA"/>
</dbReference>
<dbReference type="RefSeq" id="WP_003879483.1">
    <property type="nucleotide sequence ID" value="NZ_CP106873.1"/>
</dbReference>
<dbReference type="SMR" id="Q73S47"/>
<dbReference type="STRING" id="262316.MAP_4229"/>
<dbReference type="GeneID" id="98799388"/>
<dbReference type="KEGG" id="mpa:MAP_4229"/>
<dbReference type="eggNOG" id="COG0257">
    <property type="taxonomic scope" value="Bacteria"/>
</dbReference>
<dbReference type="HOGENOM" id="CLU_135723_6_2_11"/>
<dbReference type="Proteomes" id="UP000000580">
    <property type="component" value="Chromosome"/>
</dbReference>
<dbReference type="GO" id="GO:0005737">
    <property type="term" value="C:cytoplasm"/>
    <property type="evidence" value="ECO:0007669"/>
    <property type="project" value="UniProtKB-ARBA"/>
</dbReference>
<dbReference type="GO" id="GO:1990904">
    <property type="term" value="C:ribonucleoprotein complex"/>
    <property type="evidence" value="ECO:0007669"/>
    <property type="project" value="UniProtKB-KW"/>
</dbReference>
<dbReference type="GO" id="GO:0005840">
    <property type="term" value="C:ribosome"/>
    <property type="evidence" value="ECO:0007669"/>
    <property type="project" value="UniProtKB-KW"/>
</dbReference>
<dbReference type="GO" id="GO:0003735">
    <property type="term" value="F:structural constituent of ribosome"/>
    <property type="evidence" value="ECO:0007669"/>
    <property type="project" value="InterPro"/>
</dbReference>
<dbReference type="GO" id="GO:0006412">
    <property type="term" value="P:translation"/>
    <property type="evidence" value="ECO:0007669"/>
    <property type="project" value="UniProtKB-UniRule"/>
</dbReference>
<dbReference type="HAMAP" id="MF_00251">
    <property type="entry name" value="Ribosomal_bL36"/>
    <property type="match status" value="1"/>
</dbReference>
<dbReference type="InterPro" id="IPR000473">
    <property type="entry name" value="Ribosomal_bL36"/>
</dbReference>
<dbReference type="InterPro" id="IPR035977">
    <property type="entry name" value="Ribosomal_bL36_sp"/>
</dbReference>
<dbReference type="NCBIfam" id="TIGR01022">
    <property type="entry name" value="rpmJ_bact"/>
    <property type="match status" value="1"/>
</dbReference>
<dbReference type="PANTHER" id="PTHR42888">
    <property type="entry name" value="50S RIBOSOMAL PROTEIN L36, CHLOROPLASTIC"/>
    <property type="match status" value="1"/>
</dbReference>
<dbReference type="PANTHER" id="PTHR42888:SF1">
    <property type="entry name" value="LARGE RIBOSOMAL SUBUNIT PROTEIN BL36C"/>
    <property type="match status" value="1"/>
</dbReference>
<dbReference type="Pfam" id="PF00444">
    <property type="entry name" value="Ribosomal_L36"/>
    <property type="match status" value="1"/>
</dbReference>
<dbReference type="SUPFAM" id="SSF57840">
    <property type="entry name" value="Ribosomal protein L36"/>
    <property type="match status" value="1"/>
</dbReference>
<dbReference type="PROSITE" id="PS00828">
    <property type="entry name" value="RIBOSOMAL_L36"/>
    <property type="match status" value="1"/>
</dbReference>
<sequence>MKVNPSVKPICDKCRVIRRHGRVMVICSDPRHKQRQG</sequence>
<comment type="similarity">
    <text evidence="1">Belongs to the bacterial ribosomal protein bL36 family.</text>
</comment>
<keyword id="KW-1185">Reference proteome</keyword>
<keyword id="KW-0687">Ribonucleoprotein</keyword>
<keyword id="KW-0689">Ribosomal protein</keyword>
<name>RL36_MYCPA</name>
<gene>
    <name evidence="1" type="primary">rpmJ</name>
    <name type="ordered locus">MAP_4229</name>
</gene>
<proteinExistence type="inferred from homology"/>
<accession>Q73S47</accession>
<reference key="1">
    <citation type="journal article" date="2005" name="Proc. Natl. Acad. Sci. U.S.A.">
        <title>The complete genome sequence of Mycobacterium avium subspecies paratuberculosis.</title>
        <authorList>
            <person name="Li L."/>
            <person name="Bannantine J.P."/>
            <person name="Zhang Q."/>
            <person name="Amonsin A."/>
            <person name="May B.J."/>
            <person name="Alt D."/>
            <person name="Banerji N."/>
            <person name="Kanjilal S."/>
            <person name="Kapur V."/>
        </authorList>
    </citation>
    <scope>NUCLEOTIDE SEQUENCE [LARGE SCALE GENOMIC DNA]</scope>
    <source>
        <strain>ATCC BAA-968 / K-10</strain>
    </source>
</reference>
<protein>
    <recommendedName>
        <fullName evidence="1">Large ribosomal subunit protein bL36</fullName>
    </recommendedName>
    <alternativeName>
        <fullName evidence="2">50S ribosomal protein L36</fullName>
    </alternativeName>
</protein>